<protein>
    <recommendedName>
        <fullName evidence="1">1-deoxy-D-xylulose 5-phosphate reductoisomerase</fullName>
        <shortName evidence="1">DXP reductoisomerase</shortName>
        <ecNumber evidence="1">1.1.1.267</ecNumber>
    </recommendedName>
    <alternativeName>
        <fullName evidence="1">1-deoxyxylulose-5-phosphate reductoisomerase</fullName>
    </alternativeName>
    <alternativeName>
        <fullName evidence="1">2-C-methyl-D-erythritol 4-phosphate synthase</fullName>
    </alternativeName>
</protein>
<sequence>MKQLTILGSTGSVGTSTLAVVRENPDRFAIKALVAGRNVAVMAQQCIEFRPAYAAMADEGAARELRILLAENGIATEVMAGEQAACELAALDDVDQVTAAIVGAAGLLPTLAAIRAGKQVLLANKESLVTCGRLFMDAVQQSKTQLLPLDSEHNAIFQSLPESIQRQLGYSSLESHGVSRIVLTGSGGPFRTTPLEQFTAMTPDQACAHPNWSMGRKISVDSATMMNKGLEYIEARWLFNASAEQMEVILHPQSVIHSMVRYTDGSVLAQLGTPDMRTPIAHAMAYPQRVNSGVEALDFCRIGSLTFAEPERERYPCLYLAIEAFDAGQAATTALNAANEVAVAAFLQEQIRFTDIAAVNQKVVERLSLQEPSCIDAVLEIDRQAREVAVGLVKSLHN</sequence>
<dbReference type="EC" id="1.1.1.267" evidence="1"/>
<dbReference type="EMBL" id="CP000826">
    <property type="protein sequence ID" value="ABV42882.1"/>
    <property type="molecule type" value="Genomic_DNA"/>
</dbReference>
<dbReference type="SMR" id="A8GIE2"/>
<dbReference type="STRING" id="399741.Spro_3786"/>
<dbReference type="KEGG" id="spe:Spro_3786"/>
<dbReference type="eggNOG" id="COG0743">
    <property type="taxonomic scope" value="Bacteria"/>
</dbReference>
<dbReference type="HOGENOM" id="CLU_035714_4_0_6"/>
<dbReference type="OrthoDB" id="9806546at2"/>
<dbReference type="UniPathway" id="UPA00056">
    <property type="reaction ID" value="UER00092"/>
</dbReference>
<dbReference type="GO" id="GO:0030604">
    <property type="term" value="F:1-deoxy-D-xylulose-5-phosphate reductoisomerase activity"/>
    <property type="evidence" value="ECO:0007669"/>
    <property type="project" value="UniProtKB-UniRule"/>
</dbReference>
<dbReference type="GO" id="GO:0030145">
    <property type="term" value="F:manganese ion binding"/>
    <property type="evidence" value="ECO:0007669"/>
    <property type="project" value="TreeGrafter"/>
</dbReference>
<dbReference type="GO" id="GO:0070402">
    <property type="term" value="F:NADPH binding"/>
    <property type="evidence" value="ECO:0007669"/>
    <property type="project" value="InterPro"/>
</dbReference>
<dbReference type="GO" id="GO:0051484">
    <property type="term" value="P:isopentenyl diphosphate biosynthetic process, methylerythritol 4-phosphate pathway involved in terpenoid biosynthetic process"/>
    <property type="evidence" value="ECO:0007669"/>
    <property type="project" value="TreeGrafter"/>
</dbReference>
<dbReference type="FunFam" id="1.10.1740.10:FF:000004">
    <property type="entry name" value="1-deoxy-D-xylulose 5-phosphate reductoisomerase"/>
    <property type="match status" value="1"/>
</dbReference>
<dbReference type="FunFam" id="3.40.50.720:FF:000045">
    <property type="entry name" value="1-deoxy-D-xylulose 5-phosphate reductoisomerase"/>
    <property type="match status" value="1"/>
</dbReference>
<dbReference type="Gene3D" id="1.10.1740.10">
    <property type="match status" value="1"/>
</dbReference>
<dbReference type="Gene3D" id="3.40.50.720">
    <property type="entry name" value="NAD(P)-binding Rossmann-like Domain"/>
    <property type="match status" value="1"/>
</dbReference>
<dbReference type="HAMAP" id="MF_00183">
    <property type="entry name" value="DXP_reductoisom"/>
    <property type="match status" value="1"/>
</dbReference>
<dbReference type="InterPro" id="IPR003821">
    <property type="entry name" value="DXP_reductoisomerase"/>
</dbReference>
<dbReference type="InterPro" id="IPR013644">
    <property type="entry name" value="DXP_reductoisomerase_C"/>
</dbReference>
<dbReference type="InterPro" id="IPR013512">
    <property type="entry name" value="DXP_reductoisomerase_N"/>
</dbReference>
<dbReference type="InterPro" id="IPR026877">
    <property type="entry name" value="DXPR_C"/>
</dbReference>
<dbReference type="InterPro" id="IPR036169">
    <property type="entry name" value="DXPR_C_sf"/>
</dbReference>
<dbReference type="InterPro" id="IPR036291">
    <property type="entry name" value="NAD(P)-bd_dom_sf"/>
</dbReference>
<dbReference type="NCBIfam" id="TIGR00243">
    <property type="entry name" value="Dxr"/>
    <property type="match status" value="1"/>
</dbReference>
<dbReference type="NCBIfam" id="NF003938">
    <property type="entry name" value="PRK05447.1-1"/>
    <property type="match status" value="1"/>
</dbReference>
<dbReference type="NCBIfam" id="NF009114">
    <property type="entry name" value="PRK12464.1"/>
    <property type="match status" value="1"/>
</dbReference>
<dbReference type="PANTHER" id="PTHR30525">
    <property type="entry name" value="1-DEOXY-D-XYLULOSE 5-PHOSPHATE REDUCTOISOMERASE"/>
    <property type="match status" value="1"/>
</dbReference>
<dbReference type="PANTHER" id="PTHR30525:SF0">
    <property type="entry name" value="1-DEOXY-D-XYLULOSE 5-PHOSPHATE REDUCTOISOMERASE, CHLOROPLASTIC"/>
    <property type="match status" value="1"/>
</dbReference>
<dbReference type="Pfam" id="PF08436">
    <property type="entry name" value="DXP_redisom_C"/>
    <property type="match status" value="1"/>
</dbReference>
<dbReference type="Pfam" id="PF02670">
    <property type="entry name" value="DXP_reductoisom"/>
    <property type="match status" value="1"/>
</dbReference>
<dbReference type="Pfam" id="PF13288">
    <property type="entry name" value="DXPR_C"/>
    <property type="match status" value="1"/>
</dbReference>
<dbReference type="PIRSF" id="PIRSF006205">
    <property type="entry name" value="Dxp_reductismrs"/>
    <property type="match status" value="1"/>
</dbReference>
<dbReference type="SUPFAM" id="SSF69055">
    <property type="entry name" value="1-deoxy-D-xylulose-5-phosphate reductoisomerase, C-terminal domain"/>
    <property type="match status" value="1"/>
</dbReference>
<dbReference type="SUPFAM" id="SSF55347">
    <property type="entry name" value="Glyceraldehyde-3-phosphate dehydrogenase-like, C-terminal domain"/>
    <property type="match status" value="1"/>
</dbReference>
<dbReference type="SUPFAM" id="SSF51735">
    <property type="entry name" value="NAD(P)-binding Rossmann-fold domains"/>
    <property type="match status" value="1"/>
</dbReference>
<reference key="1">
    <citation type="submission" date="2007-09" db="EMBL/GenBank/DDBJ databases">
        <title>Complete sequence of chromosome of Serratia proteamaculans 568.</title>
        <authorList>
            <consortium name="US DOE Joint Genome Institute"/>
            <person name="Copeland A."/>
            <person name="Lucas S."/>
            <person name="Lapidus A."/>
            <person name="Barry K."/>
            <person name="Glavina del Rio T."/>
            <person name="Dalin E."/>
            <person name="Tice H."/>
            <person name="Pitluck S."/>
            <person name="Chain P."/>
            <person name="Malfatti S."/>
            <person name="Shin M."/>
            <person name="Vergez L."/>
            <person name="Schmutz J."/>
            <person name="Larimer F."/>
            <person name="Land M."/>
            <person name="Hauser L."/>
            <person name="Kyrpides N."/>
            <person name="Kim E."/>
            <person name="Taghavi S."/>
            <person name="Newman L."/>
            <person name="Vangronsveld J."/>
            <person name="van der Lelie D."/>
            <person name="Richardson P."/>
        </authorList>
    </citation>
    <scope>NUCLEOTIDE SEQUENCE [LARGE SCALE GENOMIC DNA]</scope>
    <source>
        <strain>568</strain>
    </source>
</reference>
<name>DXR_SERP5</name>
<evidence type="ECO:0000255" key="1">
    <source>
        <dbReference type="HAMAP-Rule" id="MF_00183"/>
    </source>
</evidence>
<feature type="chain" id="PRO_1000058418" description="1-deoxy-D-xylulose 5-phosphate reductoisomerase">
    <location>
        <begin position="1"/>
        <end position="398"/>
    </location>
</feature>
<feature type="binding site" evidence="1">
    <location>
        <position position="10"/>
    </location>
    <ligand>
        <name>NADPH</name>
        <dbReference type="ChEBI" id="CHEBI:57783"/>
    </ligand>
</feature>
<feature type="binding site" evidence="1">
    <location>
        <position position="11"/>
    </location>
    <ligand>
        <name>NADPH</name>
        <dbReference type="ChEBI" id="CHEBI:57783"/>
    </ligand>
</feature>
<feature type="binding site" evidence="1">
    <location>
        <position position="12"/>
    </location>
    <ligand>
        <name>NADPH</name>
        <dbReference type="ChEBI" id="CHEBI:57783"/>
    </ligand>
</feature>
<feature type="binding site" evidence="1">
    <location>
        <position position="13"/>
    </location>
    <ligand>
        <name>NADPH</name>
        <dbReference type="ChEBI" id="CHEBI:57783"/>
    </ligand>
</feature>
<feature type="binding site" evidence="1">
    <location>
        <position position="36"/>
    </location>
    <ligand>
        <name>NADPH</name>
        <dbReference type="ChEBI" id="CHEBI:57783"/>
    </ligand>
</feature>
<feature type="binding site" evidence="1">
    <location>
        <position position="37"/>
    </location>
    <ligand>
        <name>NADPH</name>
        <dbReference type="ChEBI" id="CHEBI:57783"/>
    </ligand>
</feature>
<feature type="binding site" evidence="1">
    <location>
        <position position="38"/>
    </location>
    <ligand>
        <name>NADPH</name>
        <dbReference type="ChEBI" id="CHEBI:57783"/>
    </ligand>
</feature>
<feature type="binding site" evidence="1">
    <location>
        <position position="124"/>
    </location>
    <ligand>
        <name>NADPH</name>
        <dbReference type="ChEBI" id="CHEBI:57783"/>
    </ligand>
</feature>
<feature type="binding site" evidence="1">
    <location>
        <position position="125"/>
    </location>
    <ligand>
        <name>1-deoxy-D-xylulose 5-phosphate</name>
        <dbReference type="ChEBI" id="CHEBI:57792"/>
    </ligand>
</feature>
<feature type="binding site" evidence="1">
    <location>
        <position position="126"/>
    </location>
    <ligand>
        <name>NADPH</name>
        <dbReference type="ChEBI" id="CHEBI:57783"/>
    </ligand>
</feature>
<feature type="binding site" evidence="1">
    <location>
        <position position="150"/>
    </location>
    <ligand>
        <name>Mn(2+)</name>
        <dbReference type="ChEBI" id="CHEBI:29035"/>
    </ligand>
</feature>
<feature type="binding site" evidence="1">
    <location>
        <position position="151"/>
    </location>
    <ligand>
        <name>1-deoxy-D-xylulose 5-phosphate</name>
        <dbReference type="ChEBI" id="CHEBI:57792"/>
    </ligand>
</feature>
<feature type="binding site" evidence="1">
    <location>
        <position position="152"/>
    </location>
    <ligand>
        <name>1-deoxy-D-xylulose 5-phosphate</name>
        <dbReference type="ChEBI" id="CHEBI:57792"/>
    </ligand>
</feature>
<feature type="binding site" evidence="1">
    <location>
        <position position="152"/>
    </location>
    <ligand>
        <name>Mn(2+)</name>
        <dbReference type="ChEBI" id="CHEBI:29035"/>
    </ligand>
</feature>
<feature type="binding site" evidence="1">
    <location>
        <position position="186"/>
    </location>
    <ligand>
        <name>1-deoxy-D-xylulose 5-phosphate</name>
        <dbReference type="ChEBI" id="CHEBI:57792"/>
    </ligand>
</feature>
<feature type="binding site" evidence="1">
    <location>
        <position position="209"/>
    </location>
    <ligand>
        <name>1-deoxy-D-xylulose 5-phosphate</name>
        <dbReference type="ChEBI" id="CHEBI:57792"/>
    </ligand>
</feature>
<feature type="binding site" evidence="1">
    <location>
        <position position="215"/>
    </location>
    <ligand>
        <name>NADPH</name>
        <dbReference type="ChEBI" id="CHEBI:57783"/>
    </ligand>
</feature>
<feature type="binding site" evidence="1">
    <location>
        <position position="222"/>
    </location>
    <ligand>
        <name>1-deoxy-D-xylulose 5-phosphate</name>
        <dbReference type="ChEBI" id="CHEBI:57792"/>
    </ligand>
</feature>
<feature type="binding site" evidence="1">
    <location>
        <position position="227"/>
    </location>
    <ligand>
        <name>1-deoxy-D-xylulose 5-phosphate</name>
        <dbReference type="ChEBI" id="CHEBI:57792"/>
    </ligand>
</feature>
<feature type="binding site" evidence="1">
    <location>
        <position position="228"/>
    </location>
    <ligand>
        <name>1-deoxy-D-xylulose 5-phosphate</name>
        <dbReference type="ChEBI" id="CHEBI:57792"/>
    </ligand>
</feature>
<feature type="binding site" evidence="1">
    <location>
        <position position="231"/>
    </location>
    <ligand>
        <name>1-deoxy-D-xylulose 5-phosphate</name>
        <dbReference type="ChEBI" id="CHEBI:57792"/>
    </ligand>
</feature>
<feature type="binding site" evidence="1">
    <location>
        <position position="231"/>
    </location>
    <ligand>
        <name>Mn(2+)</name>
        <dbReference type="ChEBI" id="CHEBI:29035"/>
    </ligand>
</feature>
<keyword id="KW-0414">Isoprene biosynthesis</keyword>
<keyword id="KW-0464">Manganese</keyword>
<keyword id="KW-0479">Metal-binding</keyword>
<keyword id="KW-0521">NADP</keyword>
<keyword id="KW-0560">Oxidoreductase</keyword>
<accession>A8GIE2</accession>
<proteinExistence type="inferred from homology"/>
<comment type="function">
    <text evidence="1">Catalyzes the NADPH-dependent rearrangement and reduction of 1-deoxy-D-xylulose-5-phosphate (DXP) to 2-C-methyl-D-erythritol 4-phosphate (MEP).</text>
</comment>
<comment type="catalytic activity">
    <reaction evidence="1">
        <text>2-C-methyl-D-erythritol 4-phosphate + NADP(+) = 1-deoxy-D-xylulose 5-phosphate + NADPH + H(+)</text>
        <dbReference type="Rhea" id="RHEA:13717"/>
        <dbReference type="ChEBI" id="CHEBI:15378"/>
        <dbReference type="ChEBI" id="CHEBI:57783"/>
        <dbReference type="ChEBI" id="CHEBI:57792"/>
        <dbReference type="ChEBI" id="CHEBI:58262"/>
        <dbReference type="ChEBI" id="CHEBI:58349"/>
        <dbReference type="EC" id="1.1.1.267"/>
    </reaction>
    <physiologicalReaction direction="right-to-left" evidence="1">
        <dbReference type="Rhea" id="RHEA:13719"/>
    </physiologicalReaction>
</comment>
<comment type="cofactor">
    <cofactor evidence="1">
        <name>Mg(2+)</name>
        <dbReference type="ChEBI" id="CHEBI:18420"/>
    </cofactor>
    <cofactor evidence="1">
        <name>Mn(2+)</name>
        <dbReference type="ChEBI" id="CHEBI:29035"/>
    </cofactor>
</comment>
<comment type="pathway">
    <text evidence="1">Isoprenoid biosynthesis; isopentenyl diphosphate biosynthesis via DXP pathway; isopentenyl diphosphate from 1-deoxy-D-xylulose 5-phosphate: step 1/6.</text>
</comment>
<comment type="subunit">
    <text evidence="1">Homodimer.</text>
</comment>
<comment type="similarity">
    <text evidence="1">Belongs to the DXR family.</text>
</comment>
<gene>
    <name evidence="1" type="primary">dxr</name>
    <name type="ordered locus">Spro_3786</name>
</gene>
<organism>
    <name type="scientific">Serratia proteamaculans (strain 568)</name>
    <dbReference type="NCBI Taxonomy" id="399741"/>
    <lineage>
        <taxon>Bacteria</taxon>
        <taxon>Pseudomonadati</taxon>
        <taxon>Pseudomonadota</taxon>
        <taxon>Gammaproteobacteria</taxon>
        <taxon>Enterobacterales</taxon>
        <taxon>Yersiniaceae</taxon>
        <taxon>Serratia</taxon>
    </lineage>
</organism>